<dbReference type="EMBL" id="AB004534">
    <property type="protein sequence ID" value="BAA21382.1"/>
    <property type="molecule type" value="Genomic_DNA"/>
</dbReference>
<dbReference type="EMBL" id="CU329671">
    <property type="protein sequence ID" value="CAC37510.1"/>
    <property type="molecule type" value="Genomic_DNA"/>
</dbReference>
<dbReference type="RefSeq" id="NP_595626.1">
    <property type="nucleotide sequence ID" value="NM_001021520.2"/>
</dbReference>
<dbReference type="BioGRID" id="276510">
    <property type="interactions" value="9"/>
</dbReference>
<dbReference type="FunCoup" id="O13600">
    <property type="interactions" value="3"/>
</dbReference>
<dbReference type="IntAct" id="O13600">
    <property type="interactions" value="4"/>
</dbReference>
<dbReference type="MINT" id="O13600"/>
<dbReference type="STRING" id="284812.O13600"/>
<dbReference type="PaxDb" id="4896-SPBC11B10.06.1"/>
<dbReference type="EnsemblFungi" id="SPBC11B10.06.1">
    <property type="protein sequence ID" value="SPBC11B10.06.1:pep"/>
    <property type="gene ID" value="SPBC11B10.06"/>
</dbReference>
<dbReference type="PomBase" id="SPBC11B10.06">
    <property type="gene designation" value="sws1"/>
</dbReference>
<dbReference type="VEuPathDB" id="FungiDB:SPBC11B10.06"/>
<dbReference type="HOGENOM" id="CLU_1338199_0_0_1"/>
<dbReference type="InParanoid" id="O13600"/>
<dbReference type="OMA" id="SSIGDIW"/>
<dbReference type="PRO" id="PR:O13600"/>
<dbReference type="Proteomes" id="UP000002485">
    <property type="component" value="Chromosome II"/>
</dbReference>
<dbReference type="GO" id="GO:0005829">
    <property type="term" value="C:cytosol"/>
    <property type="evidence" value="ECO:0007005"/>
    <property type="project" value="PomBase"/>
</dbReference>
<dbReference type="GO" id="GO:0005654">
    <property type="term" value="C:nucleoplasm"/>
    <property type="evidence" value="ECO:0000314"/>
    <property type="project" value="PomBase"/>
</dbReference>
<dbReference type="GO" id="GO:0005634">
    <property type="term" value="C:nucleus"/>
    <property type="evidence" value="ECO:0007005"/>
    <property type="project" value="PomBase"/>
</dbReference>
<dbReference type="GO" id="GO:0097196">
    <property type="term" value="C:Shu complex"/>
    <property type="evidence" value="ECO:0000266"/>
    <property type="project" value="PomBase"/>
</dbReference>
<dbReference type="GO" id="GO:0008270">
    <property type="term" value="F:zinc ion binding"/>
    <property type="evidence" value="ECO:0007669"/>
    <property type="project" value="UniProtKB-KW"/>
</dbReference>
<dbReference type="GO" id="GO:0000725">
    <property type="term" value="P:recombinational repair"/>
    <property type="evidence" value="ECO:0000315"/>
    <property type="project" value="PomBase"/>
</dbReference>
<dbReference type="InterPro" id="IPR007527">
    <property type="entry name" value="Znf_SWIM"/>
</dbReference>
<dbReference type="PROSITE" id="PS50966">
    <property type="entry name" value="ZF_SWIM"/>
    <property type="match status" value="1"/>
</dbReference>
<feature type="chain" id="PRO_0000223107" description="Zinc finger SWIM domain-containing protein sws1">
    <location>
        <begin position="1"/>
        <end position="209"/>
    </location>
</feature>
<feature type="zinc finger region" description="SWIM-type" evidence="1">
    <location>
        <begin position="143"/>
        <end position="203"/>
    </location>
</feature>
<feature type="region of interest" description="Disordered" evidence="2">
    <location>
        <begin position="1"/>
        <end position="33"/>
    </location>
</feature>
<feature type="compositionally biased region" description="Polar residues" evidence="2">
    <location>
        <begin position="1"/>
        <end position="30"/>
    </location>
</feature>
<feature type="mutagenesis site" description="MMS sensitive; reduced zinc chelation." evidence="3">
    <original>C</original>
    <variation>S</variation>
    <location>
        <position position="152"/>
    </location>
</feature>
<keyword id="KW-0963">Cytoplasm</keyword>
<keyword id="KW-0227">DNA damage</keyword>
<keyword id="KW-0233">DNA recombination</keyword>
<keyword id="KW-0234">DNA repair</keyword>
<keyword id="KW-0479">Metal-binding</keyword>
<keyword id="KW-0539">Nucleus</keyword>
<keyword id="KW-1185">Reference proteome</keyword>
<keyword id="KW-0862">Zinc</keyword>
<keyword id="KW-0863">Zinc-finger</keyword>
<comment type="function">
    <text evidence="3">Involved in early stages of the homologous recombination repair (HRR) pathway of double-stranded DNA breaks arising during DNA replication or induced by DNA-damaging agents.</text>
</comment>
<comment type="subunit">
    <text evidence="3">Interacts with rdl1, rlp1 and srs2.</text>
</comment>
<comment type="interaction">
    <interactant intactId="EBI-8527040">
        <id>O13600</id>
    </interactant>
    <interactant intactId="EBI-8527164">
        <id>O13800</id>
        <label>rdl1</label>
    </interactant>
    <organismsDiffer>false</organismsDiffer>
    <experiments>2</experiments>
</comment>
<comment type="interaction">
    <interactant intactId="EBI-8527040">
        <id>O13600</id>
    </interactant>
    <interactant intactId="EBI-8527133">
        <id>O74331</id>
        <label>rlp1</label>
    </interactant>
    <organismsDiffer>false</organismsDiffer>
    <experiments>2</experiments>
</comment>
<comment type="interaction">
    <interactant intactId="EBI-8527040">
        <id>O13600</id>
    </interactant>
    <interactant intactId="EBI-8527058">
        <id>Q10213</id>
        <label>srs2</label>
    </interactant>
    <organismsDiffer>false</organismsDiffer>
    <experiments>2</experiments>
</comment>
<comment type="subcellular location">
    <subcellularLocation>
        <location>Cytoplasm</location>
    </subcellularLocation>
    <subcellularLocation>
        <location>Nucleus</location>
        <location>Nucleoplasm</location>
    </subcellularLocation>
</comment>
<organism>
    <name type="scientific">Schizosaccharomyces pombe (strain 972 / ATCC 24843)</name>
    <name type="common">Fission yeast</name>
    <dbReference type="NCBI Taxonomy" id="284812"/>
    <lineage>
        <taxon>Eukaryota</taxon>
        <taxon>Fungi</taxon>
        <taxon>Dikarya</taxon>
        <taxon>Ascomycota</taxon>
        <taxon>Taphrinomycotina</taxon>
        <taxon>Schizosaccharomycetes</taxon>
        <taxon>Schizosaccharomycetales</taxon>
        <taxon>Schizosaccharomycetaceae</taxon>
        <taxon>Schizosaccharomyces</taxon>
    </lineage>
</organism>
<protein>
    <recommendedName>
        <fullName>Zinc finger SWIM domain-containing protein sws1</fullName>
    </recommendedName>
    <alternativeName>
        <fullName>SWIM domain-containing and srs2-interacting protein 1</fullName>
    </alternativeName>
</protein>
<name>SWS1_SCHPO</name>
<gene>
    <name type="primary">sws1</name>
    <name type="ORF">pi005</name>
    <name type="ORF">SPACTOKYO_453.32</name>
    <name type="ORF">SPBC11B10.06</name>
</gene>
<evidence type="ECO:0000255" key="1">
    <source>
        <dbReference type="PROSITE-ProRule" id="PRU00325"/>
    </source>
</evidence>
<evidence type="ECO:0000256" key="2">
    <source>
        <dbReference type="SAM" id="MobiDB-lite"/>
    </source>
</evidence>
<evidence type="ECO:0000269" key="3">
    <source>
    </source>
</evidence>
<sequence length="209" mass="23525">MQQGHFTSNSYHSKTLNSSSLPVSSKFSHTNDPDVEGVDNDSFSKALCNKDLDPSSTIRSVISSLLDSLQDKALQQSPNTSLSKLLLEDQDFGSLWLSLSFIFCNYWQPAMLILDSKSIHPLPLTDGEVLHRWECEVDSNNKTTIDLKYWYCSCSQFSYNAFNSSRSFDEPMPKNEQETWGGRCLSHHPTICSHILAASILRACHNLVI</sequence>
<accession>O13600</accession>
<reference key="1">
    <citation type="journal article" date="2000" name="Yeast">
        <title>A 38 kb segment containing the cdc2 gene from the left arm of fission yeast chromosome II: sequence analysis and characterization of the genomic DNA and cDNAs encoded on the segment.</title>
        <authorList>
            <person name="Machida M."/>
            <person name="Yamazaki S."/>
            <person name="Kunihiro S."/>
            <person name="Tanaka T."/>
            <person name="Kushida N."/>
            <person name="Jinno K."/>
            <person name="Haikawa Y."/>
            <person name="Yamazaki J."/>
            <person name="Yamamoto S."/>
            <person name="Sekine M."/>
            <person name="Oguchi A."/>
            <person name="Nagai Y."/>
            <person name="Sakai M."/>
            <person name="Aoki K."/>
            <person name="Ogura K."/>
            <person name="Kudoh Y."/>
            <person name="Kikuchi H."/>
            <person name="Zhang M.Q."/>
            <person name="Yanagida M."/>
        </authorList>
    </citation>
    <scope>NUCLEOTIDE SEQUENCE [LARGE SCALE GENOMIC DNA]</scope>
    <source>
        <strain>972 / ATCC 24843</strain>
    </source>
</reference>
<reference key="2">
    <citation type="journal article" date="2002" name="Nature">
        <title>The genome sequence of Schizosaccharomyces pombe.</title>
        <authorList>
            <person name="Wood V."/>
            <person name="Gwilliam R."/>
            <person name="Rajandream M.A."/>
            <person name="Lyne M.H."/>
            <person name="Lyne R."/>
            <person name="Stewart A."/>
            <person name="Sgouros J.G."/>
            <person name="Peat N."/>
            <person name="Hayles J."/>
            <person name="Baker S.G."/>
            <person name="Basham D."/>
            <person name="Bowman S."/>
            <person name="Brooks K."/>
            <person name="Brown D."/>
            <person name="Brown S."/>
            <person name="Chillingworth T."/>
            <person name="Churcher C.M."/>
            <person name="Collins M."/>
            <person name="Connor R."/>
            <person name="Cronin A."/>
            <person name="Davis P."/>
            <person name="Feltwell T."/>
            <person name="Fraser A."/>
            <person name="Gentles S."/>
            <person name="Goble A."/>
            <person name="Hamlin N."/>
            <person name="Harris D.E."/>
            <person name="Hidalgo J."/>
            <person name="Hodgson G."/>
            <person name="Holroyd S."/>
            <person name="Hornsby T."/>
            <person name="Howarth S."/>
            <person name="Huckle E.J."/>
            <person name="Hunt S."/>
            <person name="Jagels K."/>
            <person name="James K.D."/>
            <person name="Jones L."/>
            <person name="Jones M."/>
            <person name="Leather S."/>
            <person name="McDonald S."/>
            <person name="McLean J."/>
            <person name="Mooney P."/>
            <person name="Moule S."/>
            <person name="Mungall K.L."/>
            <person name="Murphy L.D."/>
            <person name="Niblett D."/>
            <person name="Odell C."/>
            <person name="Oliver K."/>
            <person name="O'Neil S."/>
            <person name="Pearson D."/>
            <person name="Quail M.A."/>
            <person name="Rabbinowitsch E."/>
            <person name="Rutherford K.M."/>
            <person name="Rutter S."/>
            <person name="Saunders D."/>
            <person name="Seeger K."/>
            <person name="Sharp S."/>
            <person name="Skelton J."/>
            <person name="Simmonds M.N."/>
            <person name="Squares R."/>
            <person name="Squares S."/>
            <person name="Stevens K."/>
            <person name="Taylor K."/>
            <person name="Taylor R.G."/>
            <person name="Tivey A."/>
            <person name="Walsh S.V."/>
            <person name="Warren T."/>
            <person name="Whitehead S."/>
            <person name="Woodward J.R."/>
            <person name="Volckaert G."/>
            <person name="Aert R."/>
            <person name="Robben J."/>
            <person name="Grymonprez B."/>
            <person name="Weltjens I."/>
            <person name="Vanstreels E."/>
            <person name="Rieger M."/>
            <person name="Schaefer M."/>
            <person name="Mueller-Auer S."/>
            <person name="Gabel C."/>
            <person name="Fuchs M."/>
            <person name="Duesterhoeft A."/>
            <person name="Fritzc C."/>
            <person name="Holzer E."/>
            <person name="Moestl D."/>
            <person name="Hilbert H."/>
            <person name="Borzym K."/>
            <person name="Langer I."/>
            <person name="Beck A."/>
            <person name="Lehrach H."/>
            <person name="Reinhardt R."/>
            <person name="Pohl T.M."/>
            <person name="Eger P."/>
            <person name="Zimmermann W."/>
            <person name="Wedler H."/>
            <person name="Wambutt R."/>
            <person name="Purnelle B."/>
            <person name="Goffeau A."/>
            <person name="Cadieu E."/>
            <person name="Dreano S."/>
            <person name="Gloux S."/>
            <person name="Lelaure V."/>
            <person name="Mottier S."/>
            <person name="Galibert F."/>
            <person name="Aves S.J."/>
            <person name="Xiang Z."/>
            <person name="Hunt C."/>
            <person name="Moore K."/>
            <person name="Hurst S.M."/>
            <person name="Lucas M."/>
            <person name="Rochet M."/>
            <person name="Gaillardin C."/>
            <person name="Tallada V.A."/>
            <person name="Garzon A."/>
            <person name="Thode G."/>
            <person name="Daga R.R."/>
            <person name="Cruzado L."/>
            <person name="Jimenez J."/>
            <person name="Sanchez M."/>
            <person name="del Rey F."/>
            <person name="Benito J."/>
            <person name="Dominguez A."/>
            <person name="Revuelta J.L."/>
            <person name="Moreno S."/>
            <person name="Armstrong J."/>
            <person name="Forsburg S.L."/>
            <person name="Cerutti L."/>
            <person name="Lowe T."/>
            <person name="McCombie W.R."/>
            <person name="Paulsen I."/>
            <person name="Potashkin J."/>
            <person name="Shpakovski G.V."/>
            <person name="Ussery D."/>
            <person name="Barrell B.G."/>
            <person name="Nurse P."/>
        </authorList>
    </citation>
    <scope>NUCLEOTIDE SEQUENCE [LARGE SCALE GENOMIC DNA]</scope>
    <source>
        <strain>972 / ATCC 24843</strain>
    </source>
</reference>
<reference key="3">
    <citation type="journal article" date="2006" name="EMBO J.">
        <title>Sws1 is a conserved regulator of homologous recombination in eukaryotic cells.</title>
        <authorList>
            <person name="Martin V."/>
            <person name="Chahwan C."/>
            <person name="Gao H."/>
            <person name="Blais V."/>
            <person name="Wohlschlegel J."/>
            <person name="Yates J.R. III"/>
            <person name="McGowan C.H."/>
            <person name="Russell P."/>
        </authorList>
    </citation>
    <scope>FUNCTION</scope>
    <scope>INTERACTION WITH RDL1; RLP1 AND SRS2</scope>
    <scope>SUBCELLULAR LOCATION</scope>
    <scope>MUTAGENESIS OF CYS-152</scope>
</reference>
<reference key="4">
    <citation type="journal article" date="2006" name="Nat. Biotechnol.">
        <title>ORFeome cloning and global analysis of protein localization in the fission yeast Schizosaccharomyces pombe.</title>
        <authorList>
            <person name="Matsuyama A."/>
            <person name="Arai R."/>
            <person name="Yashiroda Y."/>
            <person name="Shirai A."/>
            <person name="Kamata A."/>
            <person name="Sekido S."/>
            <person name="Kobayashi Y."/>
            <person name="Hashimoto A."/>
            <person name="Hamamoto M."/>
            <person name="Hiraoka Y."/>
            <person name="Horinouchi S."/>
            <person name="Yoshida M."/>
        </authorList>
    </citation>
    <scope>SUBCELLULAR LOCATION [LARGE SCALE ANALYSIS]</scope>
</reference>
<proteinExistence type="evidence at protein level"/>